<proteinExistence type="inferred from homology"/>
<organism>
    <name type="scientific">Yersinia pseudotuberculosis serotype O:1b (strain IP 31758)</name>
    <dbReference type="NCBI Taxonomy" id="349747"/>
    <lineage>
        <taxon>Bacteria</taxon>
        <taxon>Pseudomonadati</taxon>
        <taxon>Pseudomonadota</taxon>
        <taxon>Gammaproteobacteria</taxon>
        <taxon>Enterobacterales</taxon>
        <taxon>Yersiniaceae</taxon>
        <taxon>Yersinia</taxon>
    </lineage>
</organism>
<name>NSRR_YERP3</name>
<sequence>MQLTSFTDYGLRALIYMASLPDGQMTSISQVTEVYGVSRNHMVKIINQLSRVGLVTAVRGKNGGIRLGKPADQILIGDVVRQMEPLTLVNCSSDFCHITPACRLKQVLNQAVQSFLKELDNYTLADMVKDNSPLYKLLLVE</sequence>
<evidence type="ECO:0000255" key="1">
    <source>
        <dbReference type="HAMAP-Rule" id="MF_01177"/>
    </source>
</evidence>
<reference key="1">
    <citation type="journal article" date="2007" name="PLoS Genet.">
        <title>The complete genome sequence of Yersinia pseudotuberculosis IP31758, the causative agent of Far East scarlet-like fever.</title>
        <authorList>
            <person name="Eppinger M."/>
            <person name="Rosovitz M.J."/>
            <person name="Fricke W.F."/>
            <person name="Rasko D.A."/>
            <person name="Kokorina G."/>
            <person name="Fayolle C."/>
            <person name="Lindler L.E."/>
            <person name="Carniel E."/>
            <person name="Ravel J."/>
        </authorList>
    </citation>
    <scope>NUCLEOTIDE SEQUENCE [LARGE SCALE GENOMIC DNA]</scope>
    <source>
        <strain>IP 31758</strain>
    </source>
</reference>
<dbReference type="EMBL" id="CP000720">
    <property type="protein sequence ID" value="ABS46839.1"/>
    <property type="molecule type" value="Genomic_DNA"/>
</dbReference>
<dbReference type="RefSeq" id="WP_002217229.1">
    <property type="nucleotide sequence ID" value="NC_009708.1"/>
</dbReference>
<dbReference type="SMR" id="A7FMX3"/>
<dbReference type="GeneID" id="57974228"/>
<dbReference type="KEGG" id="ypi:YpsIP31758_3647"/>
<dbReference type="HOGENOM" id="CLU_107144_2_1_6"/>
<dbReference type="Proteomes" id="UP000002412">
    <property type="component" value="Chromosome"/>
</dbReference>
<dbReference type="GO" id="GO:0005829">
    <property type="term" value="C:cytosol"/>
    <property type="evidence" value="ECO:0007669"/>
    <property type="project" value="TreeGrafter"/>
</dbReference>
<dbReference type="GO" id="GO:0051537">
    <property type="term" value="F:2 iron, 2 sulfur cluster binding"/>
    <property type="evidence" value="ECO:0007669"/>
    <property type="project" value="UniProtKB-KW"/>
</dbReference>
<dbReference type="GO" id="GO:0003700">
    <property type="term" value="F:DNA-binding transcription factor activity"/>
    <property type="evidence" value="ECO:0007669"/>
    <property type="project" value="UniProtKB-UniRule"/>
</dbReference>
<dbReference type="GO" id="GO:0003690">
    <property type="term" value="F:double-stranded DNA binding"/>
    <property type="evidence" value="ECO:0007669"/>
    <property type="project" value="UniProtKB-UniRule"/>
</dbReference>
<dbReference type="GO" id="GO:0005506">
    <property type="term" value="F:iron ion binding"/>
    <property type="evidence" value="ECO:0007669"/>
    <property type="project" value="UniProtKB-UniRule"/>
</dbReference>
<dbReference type="GO" id="GO:0045892">
    <property type="term" value="P:negative regulation of DNA-templated transcription"/>
    <property type="evidence" value="ECO:0007669"/>
    <property type="project" value="InterPro"/>
</dbReference>
<dbReference type="FunFam" id="1.10.10.10:FF:000105">
    <property type="entry name" value="HTH-type transcriptional repressor NsrR"/>
    <property type="match status" value="1"/>
</dbReference>
<dbReference type="Gene3D" id="1.10.10.10">
    <property type="entry name" value="Winged helix-like DNA-binding domain superfamily/Winged helix DNA-binding domain"/>
    <property type="match status" value="1"/>
</dbReference>
<dbReference type="HAMAP" id="MF_01177">
    <property type="entry name" value="HTH_type_NsrR"/>
    <property type="match status" value="1"/>
</dbReference>
<dbReference type="InterPro" id="IPR030489">
    <property type="entry name" value="TR_Rrf2-type_CS"/>
</dbReference>
<dbReference type="InterPro" id="IPR000944">
    <property type="entry name" value="Tscrpt_reg_Rrf2"/>
</dbReference>
<dbReference type="InterPro" id="IPR023761">
    <property type="entry name" value="Tscrpt_rep_HTH_NsrR"/>
</dbReference>
<dbReference type="InterPro" id="IPR036388">
    <property type="entry name" value="WH-like_DNA-bd_sf"/>
</dbReference>
<dbReference type="InterPro" id="IPR036390">
    <property type="entry name" value="WH_DNA-bd_sf"/>
</dbReference>
<dbReference type="NCBIfam" id="NF008240">
    <property type="entry name" value="PRK11014.1"/>
    <property type="match status" value="1"/>
</dbReference>
<dbReference type="NCBIfam" id="TIGR00738">
    <property type="entry name" value="rrf2_super"/>
    <property type="match status" value="1"/>
</dbReference>
<dbReference type="PANTHER" id="PTHR33221:SF4">
    <property type="entry name" value="HTH-TYPE TRANSCRIPTIONAL REPRESSOR NSRR"/>
    <property type="match status" value="1"/>
</dbReference>
<dbReference type="PANTHER" id="PTHR33221">
    <property type="entry name" value="WINGED HELIX-TURN-HELIX TRANSCRIPTIONAL REGULATOR, RRF2 FAMILY"/>
    <property type="match status" value="1"/>
</dbReference>
<dbReference type="Pfam" id="PF02082">
    <property type="entry name" value="Rrf2"/>
    <property type="match status" value="1"/>
</dbReference>
<dbReference type="SUPFAM" id="SSF46785">
    <property type="entry name" value="Winged helix' DNA-binding domain"/>
    <property type="match status" value="1"/>
</dbReference>
<dbReference type="PROSITE" id="PS01332">
    <property type="entry name" value="HTH_RRF2_1"/>
    <property type="match status" value="1"/>
</dbReference>
<dbReference type="PROSITE" id="PS51197">
    <property type="entry name" value="HTH_RRF2_2"/>
    <property type="match status" value="1"/>
</dbReference>
<gene>
    <name evidence="1" type="primary">nsrR</name>
    <name type="ordered locus">YpsIP31758_3647</name>
</gene>
<comment type="function">
    <text evidence="1">Nitric oxide-sensitive repressor of genes involved in protecting the cell against nitrosative stress. May require iron for activity.</text>
</comment>
<comment type="cofactor">
    <cofactor evidence="1">
        <name>[2Fe-2S] cluster</name>
        <dbReference type="ChEBI" id="CHEBI:190135"/>
    </cofactor>
    <text evidence="1">Binds 1 [2Fe-2S] cluster per subunit.</text>
</comment>
<protein>
    <recommendedName>
        <fullName evidence="1">HTH-type transcriptional repressor NsrR</fullName>
    </recommendedName>
</protein>
<feature type="chain" id="PRO_1000085441" description="HTH-type transcriptional repressor NsrR">
    <location>
        <begin position="1"/>
        <end position="141"/>
    </location>
</feature>
<feature type="domain" description="HTH rrf2-type" evidence="1">
    <location>
        <begin position="2"/>
        <end position="129"/>
    </location>
</feature>
<feature type="DNA-binding region" description="H-T-H motif" evidence="1">
    <location>
        <begin position="28"/>
        <end position="51"/>
    </location>
</feature>
<feature type="binding site" evidence="1">
    <location>
        <position position="91"/>
    </location>
    <ligand>
        <name>[2Fe-2S] cluster</name>
        <dbReference type="ChEBI" id="CHEBI:190135"/>
    </ligand>
</feature>
<feature type="binding site" evidence="1">
    <location>
        <position position="96"/>
    </location>
    <ligand>
        <name>[2Fe-2S] cluster</name>
        <dbReference type="ChEBI" id="CHEBI:190135"/>
    </ligand>
</feature>
<feature type="binding site" evidence="1">
    <location>
        <position position="102"/>
    </location>
    <ligand>
        <name>[2Fe-2S] cluster</name>
        <dbReference type="ChEBI" id="CHEBI:190135"/>
    </ligand>
</feature>
<keyword id="KW-0001">2Fe-2S</keyword>
<keyword id="KW-0238">DNA-binding</keyword>
<keyword id="KW-0408">Iron</keyword>
<keyword id="KW-0411">Iron-sulfur</keyword>
<keyword id="KW-0479">Metal-binding</keyword>
<keyword id="KW-0678">Repressor</keyword>
<keyword id="KW-0804">Transcription</keyword>
<keyword id="KW-0805">Transcription regulation</keyword>
<accession>A7FMX3</accession>